<reference key="1">
    <citation type="journal article" date="2007" name="J. Bacteriol.">
        <title>Complete genome of acute rheumatic fever-associated serotype M5 Streptococcus pyogenes strain Manfredo.</title>
        <authorList>
            <person name="Holden M.T.G."/>
            <person name="Scott A."/>
            <person name="Cherevach I."/>
            <person name="Chillingworth T."/>
            <person name="Churcher C."/>
            <person name="Cronin A."/>
            <person name="Dowd L."/>
            <person name="Feltwell T."/>
            <person name="Hamlin N."/>
            <person name="Holroyd S."/>
            <person name="Jagels K."/>
            <person name="Moule S."/>
            <person name="Mungall K."/>
            <person name="Quail M.A."/>
            <person name="Price C."/>
            <person name="Rabbinowitsch E."/>
            <person name="Sharp S."/>
            <person name="Skelton J."/>
            <person name="Whitehead S."/>
            <person name="Barrell B.G."/>
            <person name="Kehoe M."/>
            <person name="Parkhill J."/>
        </authorList>
    </citation>
    <scope>NUCLEOTIDE SEQUENCE [LARGE SCALE GENOMIC DNA]</scope>
    <source>
        <strain>Manfredo</strain>
    </source>
</reference>
<protein>
    <recommendedName>
        <fullName evidence="1">Tyrosine recombinase XerD-like</fullName>
    </recommendedName>
</protein>
<name>XERDL_STRPG</name>
<organism>
    <name type="scientific">Streptococcus pyogenes serotype M5 (strain Manfredo)</name>
    <dbReference type="NCBI Taxonomy" id="160491"/>
    <lineage>
        <taxon>Bacteria</taxon>
        <taxon>Bacillati</taxon>
        <taxon>Bacillota</taxon>
        <taxon>Bacilli</taxon>
        <taxon>Lactobacillales</taxon>
        <taxon>Streptococcaceae</taxon>
        <taxon>Streptococcus</taxon>
    </lineage>
</organism>
<dbReference type="EMBL" id="AM295007">
    <property type="protein sequence ID" value="CAM30872.1"/>
    <property type="molecule type" value="Genomic_DNA"/>
</dbReference>
<dbReference type="SMR" id="A2RG93"/>
<dbReference type="KEGG" id="spf:SpyM51551"/>
<dbReference type="HOGENOM" id="CLU_1128554_0_0_9"/>
<dbReference type="GO" id="GO:0005737">
    <property type="term" value="C:cytoplasm"/>
    <property type="evidence" value="ECO:0007669"/>
    <property type="project" value="UniProtKB-SubCell"/>
</dbReference>
<dbReference type="GO" id="GO:0003677">
    <property type="term" value="F:DNA binding"/>
    <property type="evidence" value="ECO:0007669"/>
    <property type="project" value="UniProtKB-KW"/>
</dbReference>
<dbReference type="GO" id="GO:0009037">
    <property type="term" value="F:tyrosine-based site-specific recombinase activity"/>
    <property type="evidence" value="ECO:0007669"/>
    <property type="project" value="UniProtKB-UniRule"/>
</dbReference>
<dbReference type="GO" id="GO:0006313">
    <property type="term" value="P:DNA transposition"/>
    <property type="evidence" value="ECO:0007669"/>
    <property type="project" value="UniProtKB-UniRule"/>
</dbReference>
<dbReference type="CDD" id="cd01190">
    <property type="entry name" value="INT_StrepXerD_C_like"/>
    <property type="match status" value="1"/>
</dbReference>
<dbReference type="Gene3D" id="1.10.150.130">
    <property type="match status" value="1"/>
</dbReference>
<dbReference type="Gene3D" id="1.10.443.10">
    <property type="entry name" value="Intergrase catalytic core"/>
    <property type="match status" value="1"/>
</dbReference>
<dbReference type="HAMAP" id="MF_01817">
    <property type="entry name" value="Recomb_XerD_like"/>
    <property type="match status" value="1"/>
</dbReference>
<dbReference type="InterPro" id="IPR044068">
    <property type="entry name" value="CB"/>
</dbReference>
<dbReference type="InterPro" id="IPR011010">
    <property type="entry name" value="DNA_brk_join_enz"/>
</dbReference>
<dbReference type="InterPro" id="IPR013762">
    <property type="entry name" value="Integrase-like_cat_sf"/>
</dbReference>
<dbReference type="InterPro" id="IPR002104">
    <property type="entry name" value="Integrase_catalytic"/>
</dbReference>
<dbReference type="InterPro" id="IPR010998">
    <property type="entry name" value="Integrase_recombinase_N"/>
</dbReference>
<dbReference type="InterPro" id="IPR020876">
    <property type="entry name" value="Tyrosine_recombinase_XerD-like"/>
</dbReference>
<dbReference type="NCBIfam" id="NF002685">
    <property type="entry name" value="PRK02436.1"/>
    <property type="match status" value="1"/>
</dbReference>
<dbReference type="SUPFAM" id="SSF56349">
    <property type="entry name" value="DNA breaking-rejoining enzymes"/>
    <property type="match status" value="1"/>
</dbReference>
<dbReference type="PROSITE" id="PS51900">
    <property type="entry name" value="CB"/>
    <property type="match status" value="1"/>
</dbReference>
<dbReference type="PROSITE" id="PS51898">
    <property type="entry name" value="TYR_RECOMBINASE"/>
    <property type="match status" value="1"/>
</dbReference>
<feature type="chain" id="PRO_1000070259" description="Tyrosine recombinase XerD-like">
    <location>
        <begin position="1"/>
        <end position="248"/>
    </location>
</feature>
<feature type="domain" description="Core-binding (CB)" evidence="3">
    <location>
        <begin position="1"/>
        <end position="72"/>
    </location>
</feature>
<feature type="domain" description="Tyr recombinase" evidence="2">
    <location>
        <begin position="85"/>
        <end position="248"/>
    </location>
</feature>
<feature type="active site" evidence="2">
    <location>
        <position position="149"/>
    </location>
</feature>
<feature type="active site" evidence="2">
    <location>
        <position position="213"/>
    </location>
</feature>
<feature type="active site" description="O-(3'-phospho-DNA)-tyrosine intermediate" evidence="2">
    <location>
        <position position="245"/>
    </location>
</feature>
<gene>
    <name type="ordered locus">SpyM51551</name>
</gene>
<keyword id="KW-0963">Cytoplasm</keyword>
<keyword id="KW-0229">DNA integration</keyword>
<keyword id="KW-0233">DNA recombination</keyword>
<keyword id="KW-0238">DNA-binding</keyword>
<accession>A2RG93</accession>
<proteinExistence type="inferred from homology"/>
<comment type="function">
    <text evidence="1">Putative tyrosine recombinase. Not involved in the cutting and rejoining of the recombining DNA molecules on dif(SL) site.</text>
</comment>
<comment type="subcellular location">
    <subcellularLocation>
        <location evidence="1">Cytoplasm</location>
    </subcellularLocation>
</comment>
<comment type="similarity">
    <text evidence="1">Belongs to the 'phage' integrase family. XerD-like subfamily.</text>
</comment>
<sequence length="248" mass="28817">MKSYIEPFIASKALSQNSQKAYRYDLQQFCQLVGERVNQDKLLLYQNSIANLSLSAKKRKLSTANQFLYYLYQIKYLNSYFRLTDTMKVMRTEKQQAAIINTDIFYQKTPFVWGQLISLLILELGLTPSEVAGIEVANLDLNFQMLTLKTKKGVRVLPLSQILIPFLEQQLVGKEVYLFEHRGIPFSRQWFFNHLKTFVRSIGYEGLTAQKLREQFILKEKLAGKSIIELSDILGLKSPVTLEKYYKS</sequence>
<evidence type="ECO:0000255" key="1">
    <source>
        <dbReference type="HAMAP-Rule" id="MF_01817"/>
    </source>
</evidence>
<evidence type="ECO:0000255" key="2">
    <source>
        <dbReference type="PROSITE-ProRule" id="PRU01246"/>
    </source>
</evidence>
<evidence type="ECO:0000255" key="3">
    <source>
        <dbReference type="PROSITE-ProRule" id="PRU01248"/>
    </source>
</evidence>